<gene>
    <name type="primary">RAD52</name>
    <name type="ordered locus">YML032C</name>
</gene>
<feature type="chain" id="PRO_0000173892" description="DNA repair and recombination protein RAD52">
    <location>
        <begin position="1"/>
        <end position="471"/>
    </location>
</feature>
<feature type="region of interest" description="Disordered" evidence="1">
    <location>
        <begin position="166"/>
        <end position="251"/>
    </location>
</feature>
<feature type="region of interest" description="Disordered" evidence="1">
    <location>
        <begin position="417"/>
        <end position="471"/>
    </location>
</feature>
<feature type="compositionally biased region" description="Polar residues" evidence="1">
    <location>
        <begin position="182"/>
        <end position="198"/>
    </location>
</feature>
<feature type="compositionally biased region" description="Polar residues" evidence="1">
    <location>
        <begin position="205"/>
        <end position="227"/>
    </location>
</feature>
<feature type="compositionally biased region" description="Low complexity" evidence="1">
    <location>
        <begin position="420"/>
        <end position="432"/>
    </location>
</feature>
<feature type="splice variant" id="VSP_019613" description="In isoform 3." evidence="5">
    <location>
        <begin position="1"/>
        <end position="6"/>
    </location>
</feature>
<feature type="splice variant" id="VSP_019612" description="In isoform 2." evidence="5">
    <location>
        <begin position="1"/>
        <end position="4"/>
    </location>
</feature>
<name>RAD52_YEAST</name>
<reference key="1">
    <citation type="journal article" date="1984" name="Mol. Cell. Biol.">
        <title>Primary structure of the RAD52 gene in Saccharomyces cerevisiae.</title>
        <authorList>
            <person name="Adzuma K."/>
            <person name="Ogawa T."/>
            <person name="Ogawa H."/>
        </authorList>
    </citation>
    <scope>NUCLEOTIDE SEQUENCE [GENOMIC DNA]</scope>
</reference>
<reference key="2">
    <citation type="journal article" date="1997" name="Nature">
        <title>The nucleotide sequence of Saccharomyces cerevisiae chromosome XIII.</title>
        <authorList>
            <person name="Bowman S."/>
            <person name="Churcher C.M."/>
            <person name="Badcock K."/>
            <person name="Brown D."/>
            <person name="Chillingworth T."/>
            <person name="Connor R."/>
            <person name="Dedman K."/>
            <person name="Devlin K."/>
            <person name="Gentles S."/>
            <person name="Hamlin N."/>
            <person name="Hunt S."/>
            <person name="Jagels K."/>
            <person name="Lye G."/>
            <person name="Moule S."/>
            <person name="Odell C."/>
            <person name="Pearson D."/>
            <person name="Rajandream M.A."/>
            <person name="Rice P."/>
            <person name="Skelton J."/>
            <person name="Walsh S.V."/>
            <person name="Whitehead S."/>
            <person name="Barrell B.G."/>
        </authorList>
    </citation>
    <scope>NUCLEOTIDE SEQUENCE [LARGE SCALE GENOMIC DNA]</scope>
    <source>
        <strain>ATCC 204508 / S288c</strain>
    </source>
</reference>
<reference key="3">
    <citation type="journal article" date="2014" name="G3 (Bethesda)">
        <title>The reference genome sequence of Saccharomyces cerevisiae: Then and now.</title>
        <authorList>
            <person name="Engel S.R."/>
            <person name="Dietrich F.S."/>
            <person name="Fisk D.G."/>
            <person name="Binkley G."/>
            <person name="Balakrishnan R."/>
            <person name="Costanzo M.C."/>
            <person name="Dwight S.S."/>
            <person name="Hitz B.C."/>
            <person name="Karra K."/>
            <person name="Nash R.S."/>
            <person name="Weng S."/>
            <person name="Wong E.D."/>
            <person name="Lloyd P."/>
            <person name="Skrzypek M.S."/>
            <person name="Miyasato S.R."/>
            <person name="Simison M."/>
            <person name="Cherry J.M."/>
        </authorList>
    </citation>
    <scope>GENOME REANNOTATION</scope>
    <source>
        <strain>ATCC 204508 / S288c</strain>
    </source>
</reference>
<reference key="4">
    <citation type="journal article" date="2007" name="Genome Res.">
        <title>Approaching a complete repository of sequence-verified protein-encoding clones for Saccharomyces cerevisiae.</title>
        <authorList>
            <person name="Hu Y."/>
            <person name="Rolfs A."/>
            <person name="Bhullar B."/>
            <person name="Murthy T.V.S."/>
            <person name="Zhu C."/>
            <person name="Berger M.F."/>
            <person name="Camargo A.A."/>
            <person name="Kelley F."/>
            <person name="McCarron S."/>
            <person name="Jepson D."/>
            <person name="Richardson A."/>
            <person name="Raphael J."/>
            <person name="Moreira D."/>
            <person name="Taycher E."/>
            <person name="Zuo D."/>
            <person name="Mohr S."/>
            <person name="Kane M.F."/>
            <person name="Williamson J."/>
            <person name="Simpson A.J.G."/>
            <person name="Bulyk M.L."/>
            <person name="Harlow E."/>
            <person name="Marsischky G."/>
            <person name="Kolodner R.D."/>
            <person name="LaBaer J."/>
        </authorList>
    </citation>
    <scope>NUCLEOTIDE SEQUENCE [GENOMIC DNA]</scope>
    <source>
        <strain>ATCC 204508 / S288c</strain>
    </source>
</reference>
<reference key="5">
    <citation type="journal article" date="2003" name="DNA Repair">
        <title>The Rad52-Rad59 complex interacts with Rad51 and replication protein A.</title>
        <authorList>
            <person name="Davis A.P."/>
            <person name="Symington L.S."/>
        </authorList>
    </citation>
    <scope>INTERACTION WITH RAD51 AND RAD59</scope>
</reference>
<reference key="6">
    <citation type="journal article" date="2003" name="Nature">
        <title>Global analysis of protein expression in yeast.</title>
        <authorList>
            <person name="Ghaemmaghami S."/>
            <person name="Huh W.-K."/>
            <person name="Bower K."/>
            <person name="Howson R.W."/>
            <person name="Belle A."/>
            <person name="Dephoure N."/>
            <person name="O'Shea E.K."/>
            <person name="Weissman J.S."/>
        </authorList>
    </citation>
    <scope>LEVEL OF PROTEIN EXPRESSION [LARGE SCALE ANALYSIS]</scope>
</reference>
<reference key="7">
    <citation type="journal article" date="2006" name="Nucleic Acids Res.">
        <title>Multiple start codons and phosphorylation result in discrete Rad52 protein species.</title>
        <authorList>
            <person name="Antunez de Mayolo A."/>
            <person name="Lisby M."/>
            <person name="Erdeniz N."/>
            <person name="Thybo T."/>
            <person name="Mortensen U.H."/>
            <person name="Rothstein R."/>
        </authorList>
    </citation>
    <scope>IDENTIFICATION OF INITIATION SITES</scope>
    <scope>PHOSPHORYLATION</scope>
</reference>
<reference key="8">
    <citation type="journal article" date="2008" name="Mol. Cell">
        <title>Microarray-based genetic screen defines SAW1, a gene required for Rad1/Rad10-dependent processing of recombination intermediates.</title>
        <authorList>
            <person name="Li F."/>
            <person name="Dong J."/>
            <person name="Pan X."/>
            <person name="Oum J.-H."/>
            <person name="Boeke J.D."/>
            <person name="Lee S.E."/>
        </authorList>
    </citation>
    <scope>INTERACTION WITH SAW1</scope>
</reference>
<reference key="9">
    <citation type="journal article" date="2008" name="Mol. Cell. Proteomics">
        <title>A multidimensional chromatography technology for in-depth phosphoproteome analysis.</title>
        <authorList>
            <person name="Albuquerque C.P."/>
            <person name="Smolka M.B."/>
            <person name="Payne S.H."/>
            <person name="Bafna V."/>
            <person name="Eng J."/>
            <person name="Zhou H."/>
        </authorList>
    </citation>
    <scope>IDENTIFICATION BY MASS SPECTROMETRY [LARGE SCALE ANALYSIS]</scope>
</reference>
<sequence length="471" mass="52404">MNEIMDMDEKKPVFGNHSEDIQTKLDKKLGPEYISKRVGFGTSRIAYIEGWRVINLANQIFGYNGWSTEVKSVVIDFLDERQGKFSIGCTAIVRVTLTSGTYREDIGYGTVENERRKPAAFERAKKSAVTDALKRSLRGFGNALGNCLYDKDFLAKIDKVKFDPPDFDENNLFRPTDEISESSRTNTLHENQEQQQYPNKRRQLTKVTNTNPDSTKNLVKIENTVSRGTPMMAAPAEANSKNSSNKDTDLKSLDASKQDQDDLLDDSLMFSDDFQDDDLINMGNTNSNVLTTEKDPVVAKQSPTASSNPEAEQITFVTAKAATSVQNERYIGEESIFDPKYQAQSIRHTVDQTTSKHIPASVLKDKTMTTARDSVYEKFAPKGKQLSMKNNDKELGPHMLEGAGNQVPRETTPIKTNATAFPPAAAPRFAPPSKVVHPNGNGAVPAVPQQRSTRREVGRPKINPLHARKPT</sequence>
<comment type="function">
    <text>Involved in DNA double-strand break (DSB) repair and recombination. Promotes the annealing of complementary single-stranded DNA and by stimulation of the RAD51 recombinase.</text>
</comment>
<comment type="subunit">
    <text evidence="2 4">Part of a complex that includes RAD51, RAD52 and RAD59. Interacts with SAW1.</text>
</comment>
<comment type="interaction">
    <interactant intactId="EBI-14719">
        <id>P06778</id>
    </interactant>
    <interactant intactId="EBI-4308">
        <id>P25694</id>
        <label>CDC48</label>
    </interactant>
    <organismsDiffer>false</organismsDiffer>
    <experiments>4</experiments>
</comment>
<comment type="interaction">
    <interactant intactId="EBI-14719">
        <id>P06778</id>
    </interactant>
    <interactant intactId="EBI-14709">
        <id>P25454</id>
        <label>RAD51</label>
    </interactant>
    <organismsDiffer>false</organismsDiffer>
    <experiments>9</experiments>
</comment>
<comment type="interaction">
    <interactant intactId="EBI-14719">
        <id>P06778</id>
    </interactant>
    <interactant intactId="EBI-30885">
        <id>Q12223</id>
        <label>RAD59</label>
    </interactant>
    <organismsDiffer>false</organismsDiffer>
    <experiments>2</experiments>
</comment>
<comment type="interaction">
    <interactant intactId="EBI-14719">
        <id>P06778</id>
    </interactant>
    <interactant intactId="EBI-14976">
        <id>P26754</id>
        <label>RFA2</label>
    </interactant>
    <organismsDiffer>false</organismsDiffer>
    <experiments>3</experiments>
</comment>
<comment type="interaction">
    <interactant intactId="EBI-14719">
        <id>P06778</id>
    </interactant>
    <interactant intactId="EBI-17490">
        <id>Q12306</id>
        <label>SMT3</label>
    </interactant>
    <organismsDiffer>false</organismsDiffer>
    <experiments>2</experiments>
</comment>
<comment type="interaction">
    <interactant intactId="EBI-14719">
        <id>P06778</id>
    </interactant>
    <interactant intactId="EBI-19997">
        <id>P53044</id>
        <label>UFD1</label>
    </interactant>
    <organismsDiffer>false</organismsDiffer>
    <experiments>4</experiments>
</comment>
<comment type="subcellular location">
    <subcellularLocation>
        <location>Nucleus</location>
    </subcellularLocation>
</comment>
<comment type="alternative products">
    <event type="alternative initiation"/>
    <isoform>
        <id>P06778-1</id>
        <name>1</name>
        <sequence type="displayed"/>
    </isoform>
    <isoform>
        <id>P06778-2</id>
        <name>2</name>
        <sequence type="described" ref="VSP_019612"/>
    </isoform>
    <isoform>
        <id>P06778-3</id>
        <name>3</name>
        <sequence type="described" ref="VSP_019613"/>
    </isoform>
</comment>
<comment type="miscellaneous">
    <text evidence="3">Present with 1080 molecules/cell in log phase SD medium.</text>
</comment>
<comment type="miscellaneous">
    <molecule>Isoform 2</molecule>
    <text evidence="5">Produced by alternative initiation at Met-5 of isoform 1.</text>
</comment>
<comment type="miscellaneous">
    <molecule>Isoform 3</molecule>
    <text evidence="5">Produced by alternative initiation at Met-7 of isoform 1.</text>
</comment>
<comment type="similarity">
    <text evidence="5">Belongs to the RAD52 family.</text>
</comment>
<comment type="sequence caution" evidence="5">
    <conflict type="erroneous initiation">
        <sequence resource="EMBL-CDS" id="AAA50352"/>
    </conflict>
    <text>Extended N-terminus.</text>
</comment>
<comment type="sequence caution" evidence="5">
    <conflict type="erroneous initiation">
        <sequence resource="EMBL-CDS" id="AAT93163"/>
    </conflict>
    <text>Extended N-terminus.</text>
</comment>
<comment type="sequence caution" evidence="5">
    <conflict type="erroneous initiation">
        <sequence resource="EMBL-CDS" id="CAA86623"/>
    </conflict>
    <text>Extended N-terminus.</text>
</comment>
<accession>P06778</accession>
<accession>D6VZE2</accession>
<organism>
    <name type="scientific">Saccharomyces cerevisiae (strain ATCC 204508 / S288c)</name>
    <name type="common">Baker's yeast</name>
    <dbReference type="NCBI Taxonomy" id="559292"/>
    <lineage>
        <taxon>Eukaryota</taxon>
        <taxon>Fungi</taxon>
        <taxon>Dikarya</taxon>
        <taxon>Ascomycota</taxon>
        <taxon>Saccharomycotina</taxon>
        <taxon>Saccharomycetes</taxon>
        <taxon>Saccharomycetales</taxon>
        <taxon>Saccharomycetaceae</taxon>
        <taxon>Saccharomyces</taxon>
    </lineage>
</organism>
<keyword id="KW-0002">3D-structure</keyword>
<keyword id="KW-0024">Alternative initiation</keyword>
<keyword id="KW-0227">DNA damage</keyword>
<keyword id="KW-0233">DNA recombination</keyword>
<keyword id="KW-0234">DNA repair</keyword>
<keyword id="KW-0539">Nucleus</keyword>
<keyword id="KW-0597">Phosphoprotein</keyword>
<keyword id="KW-1185">Reference proteome</keyword>
<dbReference type="EMBL" id="M10249">
    <property type="protein sequence ID" value="AAA50352.1"/>
    <property type="status" value="ALT_INIT"/>
    <property type="molecule type" value="Genomic_DNA"/>
</dbReference>
<dbReference type="EMBL" id="Z46659">
    <property type="protein sequence ID" value="CAA86623.1"/>
    <property type="status" value="ALT_INIT"/>
    <property type="molecule type" value="Genomic_DNA"/>
</dbReference>
<dbReference type="EMBL" id="AY693144">
    <property type="protein sequence ID" value="AAT93163.1"/>
    <property type="status" value="ALT_INIT"/>
    <property type="molecule type" value="Genomic_DNA"/>
</dbReference>
<dbReference type="EMBL" id="BK006946">
    <property type="protein sequence ID" value="DAA09866.1"/>
    <property type="molecule type" value="Genomic_DNA"/>
</dbReference>
<dbReference type="PIR" id="A23282">
    <property type="entry name" value="A23282"/>
</dbReference>
<dbReference type="RefSeq" id="NP_013680.2">
    <molecule id="P06778-1"/>
    <property type="nucleotide sequence ID" value="NM_001182390.1"/>
</dbReference>
<dbReference type="PDB" id="8G3G">
    <property type="method" value="EM"/>
    <property type="resolution" value="3.50 A"/>
    <property type="chains" value="A/B/C/D/E/F/G/H/I/J=1-471"/>
</dbReference>
<dbReference type="PDBsum" id="8G3G"/>
<dbReference type="EMDB" id="EMD-29695"/>
<dbReference type="SMR" id="P06778"/>
<dbReference type="BioGRID" id="35137">
    <property type="interactions" value="601"/>
</dbReference>
<dbReference type="DIP" id="DIP-3N"/>
<dbReference type="FunCoup" id="P06778">
    <property type="interactions" value="362"/>
</dbReference>
<dbReference type="IntAct" id="P06778">
    <property type="interactions" value="32"/>
</dbReference>
<dbReference type="MINT" id="P06778"/>
<dbReference type="STRING" id="4932.YML032C"/>
<dbReference type="iPTMnet" id="P06778"/>
<dbReference type="PaxDb" id="4932-YML032C"/>
<dbReference type="PeptideAtlas" id="P06778"/>
<dbReference type="EnsemblFungi" id="YML032C_mRNA">
    <molecule id="P06778-1"/>
    <property type="protein sequence ID" value="YML032C"/>
    <property type="gene ID" value="YML032C"/>
</dbReference>
<dbReference type="GeneID" id="854976"/>
<dbReference type="KEGG" id="sce:YML032C"/>
<dbReference type="AGR" id="SGD:S000004494"/>
<dbReference type="SGD" id="S000004494">
    <property type="gene designation" value="RAD52"/>
</dbReference>
<dbReference type="VEuPathDB" id="FungiDB:YML032C"/>
<dbReference type="eggNOG" id="KOG4141">
    <property type="taxonomic scope" value="Eukaryota"/>
</dbReference>
<dbReference type="GeneTree" id="ENSGT00390000008766"/>
<dbReference type="HOGENOM" id="CLU_011431_3_2_1"/>
<dbReference type="InParanoid" id="P06778"/>
<dbReference type="OMA" id="MFSDDFQ"/>
<dbReference type="OrthoDB" id="206565at2759"/>
<dbReference type="BioCyc" id="YEAST:G3O-32633-MONOMER"/>
<dbReference type="Reactome" id="R-SCE-3108214">
    <property type="pathway name" value="SUMOylation of DNA damage response and repair proteins"/>
</dbReference>
<dbReference type="Reactome" id="R-SCE-5685938">
    <property type="pathway name" value="HDR through Single Strand Annealing (SSA)"/>
</dbReference>
<dbReference type="BioGRID-ORCS" id="854976">
    <property type="hits" value="7 hits in 10 CRISPR screens"/>
</dbReference>
<dbReference type="CD-CODE" id="C555D4ED">
    <property type="entry name" value="DNA damage foci"/>
</dbReference>
<dbReference type="PRO" id="PR:P06778"/>
<dbReference type="Proteomes" id="UP000002311">
    <property type="component" value="Chromosome XIII"/>
</dbReference>
<dbReference type="RNAct" id="P06778">
    <property type="molecule type" value="protein"/>
</dbReference>
<dbReference type="GO" id="GO:0005739">
    <property type="term" value="C:mitochondrion"/>
    <property type="evidence" value="ECO:0007669"/>
    <property type="project" value="GOC"/>
</dbReference>
<dbReference type="GO" id="GO:0000228">
    <property type="term" value="C:nuclear chromosome"/>
    <property type="evidence" value="ECO:0000314"/>
    <property type="project" value="SGD"/>
</dbReference>
<dbReference type="GO" id="GO:0005634">
    <property type="term" value="C:nucleus"/>
    <property type="evidence" value="ECO:0000314"/>
    <property type="project" value="SGD"/>
</dbReference>
<dbReference type="GO" id="GO:0000150">
    <property type="term" value="F:DNA strand exchange activity"/>
    <property type="evidence" value="ECO:0000314"/>
    <property type="project" value="SGD"/>
</dbReference>
<dbReference type="GO" id="GO:1990814">
    <property type="term" value="F:DNA/DNA annealing activity"/>
    <property type="evidence" value="ECO:0000314"/>
    <property type="project" value="SGD"/>
</dbReference>
<dbReference type="GO" id="GO:0006277">
    <property type="term" value="P:DNA amplification"/>
    <property type="evidence" value="ECO:0000315"/>
    <property type="project" value="SGD"/>
</dbReference>
<dbReference type="GO" id="GO:0000730">
    <property type="term" value="P:DNA recombinase assembly"/>
    <property type="evidence" value="ECO:0000314"/>
    <property type="project" value="SGD"/>
</dbReference>
<dbReference type="GO" id="GO:0000727">
    <property type="term" value="P:double-strand break repair via break-induced replication"/>
    <property type="evidence" value="ECO:0000315"/>
    <property type="project" value="SGD"/>
</dbReference>
<dbReference type="GO" id="GO:0000724">
    <property type="term" value="P:double-strand break repair via homologous recombination"/>
    <property type="evidence" value="ECO:0000315"/>
    <property type="project" value="SGD"/>
</dbReference>
<dbReference type="GO" id="GO:0045002">
    <property type="term" value="P:double-strand break repair via single-strand annealing"/>
    <property type="evidence" value="ECO:0000316"/>
    <property type="project" value="SGD"/>
</dbReference>
<dbReference type="GO" id="GO:0000709">
    <property type="term" value="P:meiotic joint molecule formation"/>
    <property type="evidence" value="ECO:0000315"/>
    <property type="project" value="SGD"/>
</dbReference>
<dbReference type="GO" id="GO:0043504">
    <property type="term" value="P:mitochondrial DNA repair"/>
    <property type="evidence" value="ECO:0000315"/>
    <property type="project" value="SGD"/>
</dbReference>
<dbReference type="GO" id="GO:0006312">
    <property type="term" value="P:mitotic recombination"/>
    <property type="evidence" value="ECO:0000318"/>
    <property type="project" value="GO_Central"/>
</dbReference>
<dbReference type="GO" id="GO:0006301">
    <property type="term" value="P:postreplication repair"/>
    <property type="evidence" value="ECO:0000315"/>
    <property type="project" value="SGD"/>
</dbReference>
<dbReference type="GO" id="GO:0000722">
    <property type="term" value="P:telomere maintenance via recombination"/>
    <property type="evidence" value="ECO:0000315"/>
    <property type="project" value="SGD"/>
</dbReference>
<dbReference type="FunFam" id="3.30.390.80:FF:000001">
    <property type="entry name" value="DNA repair protein RAD52 homolog"/>
    <property type="match status" value="1"/>
</dbReference>
<dbReference type="Gene3D" id="3.30.390.80">
    <property type="entry name" value="DNA repair protein Rad52/59/22"/>
    <property type="match status" value="1"/>
</dbReference>
<dbReference type="InterPro" id="IPR004585">
    <property type="entry name" value="DNA_recomb/repair_Rad52"/>
</dbReference>
<dbReference type="InterPro" id="IPR041247">
    <property type="entry name" value="Rad52_fam"/>
</dbReference>
<dbReference type="InterPro" id="IPR007232">
    <property type="entry name" value="Rad52_Rad59_Rad22"/>
</dbReference>
<dbReference type="InterPro" id="IPR042525">
    <property type="entry name" value="Rad52_Rad59_Rad22_sf"/>
</dbReference>
<dbReference type="NCBIfam" id="TIGR00607">
    <property type="entry name" value="rad52"/>
    <property type="match status" value="1"/>
</dbReference>
<dbReference type="PANTHER" id="PTHR12132">
    <property type="entry name" value="DNA REPAIR AND RECOMBINATION PROTEIN RAD52, RAD59"/>
    <property type="match status" value="1"/>
</dbReference>
<dbReference type="PANTHER" id="PTHR12132:SF1">
    <property type="entry name" value="DNA REPAIR PROTEIN RAD52 HOMOLOG"/>
    <property type="match status" value="1"/>
</dbReference>
<dbReference type="Pfam" id="PF04098">
    <property type="entry name" value="Rad52_Rad22"/>
    <property type="match status" value="1"/>
</dbReference>
<dbReference type="SUPFAM" id="SSF54768">
    <property type="entry name" value="dsRNA-binding domain-like"/>
    <property type="match status" value="1"/>
</dbReference>
<evidence type="ECO:0000256" key="1">
    <source>
        <dbReference type="SAM" id="MobiDB-lite"/>
    </source>
</evidence>
<evidence type="ECO:0000269" key="2">
    <source>
    </source>
</evidence>
<evidence type="ECO:0000269" key="3">
    <source>
    </source>
</evidence>
<evidence type="ECO:0000269" key="4">
    <source>
    </source>
</evidence>
<evidence type="ECO:0000305" key="5"/>
<proteinExistence type="evidence at protein level"/>
<protein>
    <recommendedName>
        <fullName>DNA repair and recombination protein RAD52</fullName>
    </recommendedName>
</protein>